<name>PDE6_DROVI</name>
<proteinExistence type="inferred from homology"/>
<comment type="function">
    <text evidence="2">Has a role regulating cGMP transport in Malpighian tubule principal cells.</text>
</comment>
<comment type="catalytic activity">
    <reaction evidence="2">
        <text>3',5'-cyclic GMP + H2O = GMP + H(+)</text>
        <dbReference type="Rhea" id="RHEA:16957"/>
        <dbReference type="ChEBI" id="CHEBI:15377"/>
        <dbReference type="ChEBI" id="CHEBI:15378"/>
        <dbReference type="ChEBI" id="CHEBI:57746"/>
        <dbReference type="ChEBI" id="CHEBI:58115"/>
        <dbReference type="EC" id="3.1.4.35"/>
    </reaction>
</comment>
<comment type="cofactor">
    <cofactor evidence="1">
        <name>a divalent metal cation</name>
        <dbReference type="ChEBI" id="CHEBI:60240"/>
    </cofactor>
    <text evidence="1">Binds 2 divalent metal cations per subunit. Site 1 may preferentially bind zinc ions, while site 2 has a preference for magnesium and/or manganese ions.</text>
</comment>
<comment type="subunit">
    <text evidence="2">Interacts with PrBP.</text>
</comment>
<comment type="subcellular location">
    <subcellularLocation>
        <location evidence="2">Cell membrane</location>
        <topology evidence="2">Lipid-anchor</topology>
        <orientation evidence="2">Cytoplasmic side</orientation>
    </subcellularLocation>
</comment>
<comment type="similarity">
    <text evidence="3">Belongs to the cyclic nucleotide phosphodiesterase family.</text>
</comment>
<reference evidence="6" key="1">
    <citation type="journal article" date="2007" name="Nature">
        <title>Evolution of genes and genomes on the Drosophila phylogeny.</title>
        <authorList>
            <consortium name="Drosophila 12 genomes consortium"/>
        </authorList>
    </citation>
    <scope>NUCLEOTIDE SEQUENCE [LARGE SCALE GENOMIC DNA]</scope>
    <source>
        <strain evidence="6">Tucson 15010-1051.87</strain>
    </source>
</reference>
<feature type="chain" id="PRO_0000363700" description="cGMP-specific 3',5'-cyclic phosphodiesterase">
    <location>
        <begin position="1"/>
        <end position="890"/>
    </location>
</feature>
<feature type="propeptide" id="PRO_0000363701" description="Removed in mature form" evidence="2">
    <location>
        <begin position="891"/>
        <end position="893"/>
    </location>
</feature>
<feature type="domain" description="GAF 1" evidence="3">
    <location>
        <begin position="21"/>
        <end position="173"/>
    </location>
</feature>
<feature type="domain" description="GAF 2" evidence="3">
    <location>
        <begin position="205"/>
        <end position="390"/>
    </location>
</feature>
<feature type="domain" description="PDEase" evidence="4">
    <location>
        <begin position="420"/>
        <end position="743"/>
    </location>
</feature>
<feature type="region of interest" description="Disordered" evidence="5">
    <location>
        <begin position="784"/>
        <end position="807"/>
    </location>
</feature>
<feature type="region of interest" description="Disordered" evidence="5">
    <location>
        <begin position="844"/>
        <end position="893"/>
    </location>
</feature>
<feature type="compositionally biased region" description="Basic and acidic residues" evidence="5">
    <location>
        <begin position="789"/>
        <end position="800"/>
    </location>
</feature>
<feature type="compositionally biased region" description="Basic and acidic residues" evidence="5">
    <location>
        <begin position="844"/>
        <end position="853"/>
    </location>
</feature>
<feature type="compositionally biased region" description="Low complexity" evidence="5">
    <location>
        <begin position="864"/>
        <end position="880"/>
    </location>
</feature>
<feature type="compositionally biased region" description="Basic residues" evidence="5">
    <location>
        <begin position="883"/>
        <end position="893"/>
    </location>
</feature>
<feature type="active site" description="Proton donor" evidence="1">
    <location>
        <position position="496"/>
    </location>
</feature>
<feature type="binding site" evidence="1">
    <location>
        <position position="500"/>
    </location>
    <ligand>
        <name>a divalent metal cation</name>
        <dbReference type="ChEBI" id="CHEBI:60240"/>
        <label>1</label>
    </ligand>
</feature>
<feature type="binding site" evidence="1">
    <location>
        <position position="536"/>
    </location>
    <ligand>
        <name>a divalent metal cation</name>
        <dbReference type="ChEBI" id="CHEBI:60240"/>
        <label>1</label>
    </ligand>
</feature>
<feature type="binding site" evidence="1">
    <location>
        <position position="537"/>
    </location>
    <ligand>
        <name>a divalent metal cation</name>
        <dbReference type="ChEBI" id="CHEBI:60240"/>
        <label>1</label>
    </ligand>
</feature>
<feature type="binding site" evidence="1">
    <location>
        <position position="537"/>
    </location>
    <ligand>
        <name>a divalent metal cation</name>
        <dbReference type="ChEBI" id="CHEBI:60240"/>
        <label>2</label>
    </ligand>
</feature>
<feature type="binding site" evidence="1">
    <location>
        <position position="647"/>
    </location>
    <ligand>
        <name>a divalent metal cation</name>
        <dbReference type="ChEBI" id="CHEBI:60240"/>
        <label>1</label>
    </ligand>
</feature>
<feature type="modified residue" description="Cysteine methyl ester" evidence="2">
    <location>
        <position position="890"/>
    </location>
</feature>
<feature type="lipid moiety-binding region" description="S-farnesyl cysteine" evidence="2">
    <location>
        <position position="890"/>
    </location>
</feature>
<dbReference type="EC" id="3.1.4.35"/>
<dbReference type="EMBL" id="CH940650">
    <property type="protein sequence ID" value="EDW67551.1"/>
    <property type="molecule type" value="Genomic_DNA"/>
</dbReference>
<dbReference type="RefSeq" id="XP_002054031.2">
    <property type="nucleotide sequence ID" value="XM_002053995.2"/>
</dbReference>
<dbReference type="SMR" id="B4LVU6"/>
<dbReference type="FunCoup" id="B4LVU6">
    <property type="interactions" value="212"/>
</dbReference>
<dbReference type="STRING" id="7244.B4LVU6"/>
<dbReference type="EnsemblMetazoa" id="FBtr0238944">
    <property type="protein sequence ID" value="FBpp0237436"/>
    <property type="gene ID" value="FBgn0210121"/>
</dbReference>
<dbReference type="EnsemblMetazoa" id="XM_032439565.1">
    <property type="protein sequence ID" value="XP_032295456.1"/>
    <property type="gene ID" value="LOC6630351"/>
</dbReference>
<dbReference type="eggNOG" id="KOG3689">
    <property type="taxonomic scope" value="Eukaryota"/>
</dbReference>
<dbReference type="HOGENOM" id="CLU_006980_0_2_1"/>
<dbReference type="InParanoid" id="B4LVU6"/>
<dbReference type="OMA" id="FHIPYEV"/>
<dbReference type="OrthoDB" id="74705at2759"/>
<dbReference type="PhylomeDB" id="B4LVU6"/>
<dbReference type="ChiTaRS" id="Pde6">
    <property type="organism name" value="fly"/>
</dbReference>
<dbReference type="Proteomes" id="UP000008792">
    <property type="component" value="Unassembled WGS sequence"/>
</dbReference>
<dbReference type="GO" id="GO:0016020">
    <property type="term" value="C:membrane"/>
    <property type="evidence" value="ECO:0000250"/>
    <property type="project" value="UniProtKB"/>
</dbReference>
<dbReference type="GO" id="GO:0005886">
    <property type="term" value="C:plasma membrane"/>
    <property type="evidence" value="ECO:0007669"/>
    <property type="project" value="UniProtKB-SubCell"/>
</dbReference>
<dbReference type="GO" id="GO:0047555">
    <property type="term" value="F:3',5'-cyclic-GMP phosphodiesterase activity"/>
    <property type="evidence" value="ECO:0000250"/>
    <property type="project" value="UniProtKB"/>
</dbReference>
<dbReference type="GO" id="GO:0046872">
    <property type="term" value="F:metal ion binding"/>
    <property type="evidence" value="ECO:0007669"/>
    <property type="project" value="UniProtKB-KW"/>
</dbReference>
<dbReference type="GO" id="GO:0046068">
    <property type="term" value="P:cGMP metabolic process"/>
    <property type="evidence" value="ECO:0000250"/>
    <property type="project" value="UniProtKB"/>
</dbReference>
<dbReference type="GO" id="GO:0007165">
    <property type="term" value="P:signal transduction"/>
    <property type="evidence" value="ECO:0007669"/>
    <property type="project" value="InterPro"/>
</dbReference>
<dbReference type="CDD" id="cd00077">
    <property type="entry name" value="HDc"/>
    <property type="match status" value="1"/>
</dbReference>
<dbReference type="FunFam" id="1.10.1300.10:FF:000003">
    <property type="entry name" value="Phosphodiesterase"/>
    <property type="match status" value="1"/>
</dbReference>
<dbReference type="FunFam" id="3.30.450.40:FF:000031">
    <property type="entry name" value="Phosphodiesterase"/>
    <property type="match status" value="1"/>
</dbReference>
<dbReference type="Gene3D" id="3.30.450.40">
    <property type="match status" value="2"/>
</dbReference>
<dbReference type="Gene3D" id="1.10.1300.10">
    <property type="entry name" value="3'5'-cyclic nucleotide phosphodiesterase, catalytic domain"/>
    <property type="match status" value="1"/>
</dbReference>
<dbReference type="InterPro" id="IPR003018">
    <property type="entry name" value="GAF"/>
</dbReference>
<dbReference type="InterPro" id="IPR029016">
    <property type="entry name" value="GAF-like_dom_sf"/>
</dbReference>
<dbReference type="InterPro" id="IPR003607">
    <property type="entry name" value="HD/PDEase_dom"/>
</dbReference>
<dbReference type="InterPro" id="IPR023088">
    <property type="entry name" value="PDEase"/>
</dbReference>
<dbReference type="InterPro" id="IPR002073">
    <property type="entry name" value="PDEase_catalytic_dom"/>
</dbReference>
<dbReference type="InterPro" id="IPR036971">
    <property type="entry name" value="PDEase_catalytic_dom_sf"/>
</dbReference>
<dbReference type="InterPro" id="IPR023174">
    <property type="entry name" value="PDEase_CS"/>
</dbReference>
<dbReference type="PANTHER" id="PTHR11347">
    <property type="entry name" value="CYCLIC NUCLEOTIDE PHOSPHODIESTERASE"/>
    <property type="match status" value="1"/>
</dbReference>
<dbReference type="Pfam" id="PF01590">
    <property type="entry name" value="GAF"/>
    <property type="match status" value="2"/>
</dbReference>
<dbReference type="Pfam" id="PF00233">
    <property type="entry name" value="PDEase_I"/>
    <property type="match status" value="1"/>
</dbReference>
<dbReference type="PRINTS" id="PR00387">
    <property type="entry name" value="PDIESTERASE1"/>
</dbReference>
<dbReference type="SMART" id="SM00065">
    <property type="entry name" value="GAF"/>
    <property type="match status" value="2"/>
</dbReference>
<dbReference type="SMART" id="SM00471">
    <property type="entry name" value="HDc"/>
    <property type="match status" value="1"/>
</dbReference>
<dbReference type="SUPFAM" id="SSF55781">
    <property type="entry name" value="GAF domain-like"/>
    <property type="match status" value="2"/>
</dbReference>
<dbReference type="SUPFAM" id="SSF109604">
    <property type="entry name" value="HD-domain/PDEase-like"/>
    <property type="match status" value="1"/>
</dbReference>
<dbReference type="PROSITE" id="PS00126">
    <property type="entry name" value="PDEASE_I_1"/>
    <property type="match status" value="1"/>
</dbReference>
<dbReference type="PROSITE" id="PS51845">
    <property type="entry name" value="PDEASE_I_2"/>
    <property type="match status" value="1"/>
</dbReference>
<keyword id="KW-1003">Cell membrane</keyword>
<keyword id="KW-0140">cGMP</keyword>
<keyword id="KW-0378">Hydrolase</keyword>
<keyword id="KW-0449">Lipoprotein</keyword>
<keyword id="KW-0472">Membrane</keyword>
<keyword id="KW-0479">Metal-binding</keyword>
<keyword id="KW-0488">Methylation</keyword>
<keyword id="KW-0636">Prenylation</keyword>
<keyword id="KW-1185">Reference proteome</keyword>
<keyword id="KW-0677">Repeat</keyword>
<gene>
    <name evidence="2" type="primary">Pde6</name>
    <name type="ORF">GJ23019</name>
</gene>
<sequence>MELDEGELFMELIRDVANELDIDVLCHKILVNVGLLTHADRGSLFLAKGTPNNKYLVAKLFDVTQKTALKDAVTRARAEEIIIPFGIGIAGMVAQTKEMINIKEAYMDARFNCEIDLKTGYKTNAILCMPICNYEGDIIGVAQIINKTNGCMEFDEHDVEIFRRYLTFCGIGIQNAQLFEMSVQEYRRNQILLNLARSIFEEQNNLECLVTKIMTEARELLKCERCSVFLVDLDCCEESHLEKIIEKPHQLEQRATRAIKGGDSFEEKQKMRNRFTVLFELGGESQAANVSRPSINDLSHSTLAQIAQFVATTGQTVNICDVHDWVREHNQIRAEGEIDSTHAILCMPIVNAQKTVIGVAQLINKASGLPFTESDASIFEAFAIFCGLGIHNTQMYENACKLMAKQKVALECLSYHATAGQDQTEKLIQDPIAEAETYNLYSFTFTDFDLVDDDTCRAVLRMFMQCNLVSQFHIPYDVLCRWVLSVRKNYRPVKYHNWRHALNVAQTMFAMLKTGKMERFMTDLEILGLLVACLCHDLDHRGTNNAFQTKTESPLAILYTTSTMEHHHFDQCVMILNSEGNNIFQALSPEDYRSVMKTVESAILSTDLAMYFKKRNAFLELVENGEFDWQGEEKKDLLCGMMMTACDVSAIAKPWEVQHRVAKLVADEFFDQGDLEKLQLNTQPVAMMDRERKDELPKMQVGFIDVICLPLYRVLCDTFPWITPLYEGTLENRRNWQDLAEKVEMGLTWIDHDTIDKPVEEFAGCADEEIKDIEFTVTTLNCNQQSQHGGDDSHTPEHQRSGSRLSIKKTGALGKVVRSKLSKTLYNSMDGSKPKTSLKLLESHVSEDMDDKSPTSPSQPHLGSVGRMSASSSTSSAGTVDKSKKRSKLCALL</sequence>
<protein>
    <recommendedName>
        <fullName evidence="2">cGMP-specific 3',5'-cyclic phosphodiesterase</fullName>
        <ecNumber>3.1.4.35</ecNumber>
    </recommendedName>
</protein>
<organism>
    <name type="scientific">Drosophila virilis</name>
    <name type="common">Fruit fly</name>
    <dbReference type="NCBI Taxonomy" id="7244"/>
    <lineage>
        <taxon>Eukaryota</taxon>
        <taxon>Metazoa</taxon>
        <taxon>Ecdysozoa</taxon>
        <taxon>Arthropoda</taxon>
        <taxon>Hexapoda</taxon>
        <taxon>Insecta</taxon>
        <taxon>Pterygota</taxon>
        <taxon>Neoptera</taxon>
        <taxon>Endopterygota</taxon>
        <taxon>Diptera</taxon>
        <taxon>Brachycera</taxon>
        <taxon>Muscomorpha</taxon>
        <taxon>Ephydroidea</taxon>
        <taxon>Drosophilidae</taxon>
        <taxon>Drosophila</taxon>
    </lineage>
</organism>
<evidence type="ECO:0000250" key="1"/>
<evidence type="ECO:0000250" key="2">
    <source>
        <dbReference type="UniProtKB" id="Q9VFI9"/>
    </source>
</evidence>
<evidence type="ECO:0000255" key="3"/>
<evidence type="ECO:0000255" key="4">
    <source>
        <dbReference type="PROSITE-ProRule" id="PRU01192"/>
    </source>
</evidence>
<evidence type="ECO:0000256" key="5">
    <source>
        <dbReference type="SAM" id="MobiDB-lite"/>
    </source>
</evidence>
<evidence type="ECO:0000312" key="6">
    <source>
        <dbReference type="EMBL" id="EDW67551.1"/>
    </source>
</evidence>
<accession>B4LVU6</accession>